<comment type="function">
    <text evidence="1">The RuvA-RuvB-RuvC complex processes Holliday junction (HJ) DNA during genetic recombination and DNA repair, while the RuvA-RuvB complex plays an important role in the rescue of blocked DNA replication forks via replication fork reversal (RFR). RuvA specifically binds to HJ cruciform DNA, conferring on it an open structure. The RuvB hexamer acts as an ATP-dependent pump, pulling dsDNA into and through the RuvAB complex. RuvB forms 2 homohexamers on either side of HJ DNA bound by 1 or 2 RuvA tetramers; 4 subunits per hexamer contact DNA at a time. Coordinated motions by a converter formed by DNA-disengaged RuvB subunits stimulates ATP hydrolysis and nucleotide exchange. Immobilization of the converter enables RuvB to convert the ATP-contained energy into a lever motion, pulling 2 nucleotides of DNA out of the RuvA tetramer per ATP hydrolyzed, thus driving DNA branch migration. The RuvB motors rotate together with the DNA substrate, which together with the progressing nucleotide cycle form the mechanistic basis for DNA recombination by continuous HJ branch migration. Branch migration allows RuvC to scan DNA until it finds its consensus sequence, where it cleaves and resolves cruciform DNA.</text>
</comment>
<comment type="catalytic activity">
    <reaction evidence="1">
        <text>ATP + H2O = ADP + phosphate + H(+)</text>
        <dbReference type="Rhea" id="RHEA:13065"/>
        <dbReference type="ChEBI" id="CHEBI:15377"/>
        <dbReference type="ChEBI" id="CHEBI:15378"/>
        <dbReference type="ChEBI" id="CHEBI:30616"/>
        <dbReference type="ChEBI" id="CHEBI:43474"/>
        <dbReference type="ChEBI" id="CHEBI:456216"/>
    </reaction>
</comment>
<comment type="subunit">
    <text evidence="1">Homohexamer. Forms an RuvA(8)-RuvB(12)-Holliday junction (HJ) complex. HJ DNA is sandwiched between 2 RuvA tetramers; dsDNA enters through RuvA and exits via RuvB. An RuvB hexamer assembles on each DNA strand where it exits the tetramer. Each RuvB hexamer is contacted by two RuvA subunits (via domain III) on 2 adjacent RuvB subunits; this complex drives branch migration. In the full resolvosome a probable DNA-RuvA(4)-RuvB(12)-RuvC(2) complex forms which resolves the HJ.</text>
</comment>
<comment type="subcellular location">
    <subcellularLocation>
        <location evidence="1">Cytoplasm</location>
    </subcellularLocation>
</comment>
<comment type="domain">
    <text evidence="1">Has 3 domains, the large (RuvB-L) and small ATPase (RuvB-S) domains and the C-terminal head (RuvB-H) domain. The head domain binds DNA, while the ATPase domains jointly bind ATP, ADP or are empty depending on the state of the subunit in the translocation cycle. During a single DNA translocation step the structure of each domain remains the same, but their relative positions change.</text>
</comment>
<comment type="similarity">
    <text evidence="1">Belongs to the RuvB family.</text>
</comment>
<protein>
    <recommendedName>
        <fullName evidence="1">Holliday junction branch migration complex subunit RuvB</fullName>
        <ecNumber evidence="1">3.6.4.-</ecNumber>
    </recommendedName>
</protein>
<sequence>MPENLEIRPSSFENFIGQKKLVETLQILISSSQKRKQSLDHILFYGPPGTGKTTLANIVANVLEAKIKYVQGPLLEKKSDVLAVLANISPDTIIFIDEIHGINKNIEELLYSAMEEFVIDLQIGVDGERKIMRMKLPQFTLIGASTKLAQISTPLQNRFGYVAKIVDYTLEDMIQIIRNSSAVLKLKMNTEIIKYIASFSNNTPRIANNLLKRIRDFALVLNAKRIDKDIVNKTFDSIGIYNQGLSQINIEYLNLLVKIFKGKSVALDVIANVLKEHRQTIINIIEPPLIEKELIEKTSRGRRITKKGRDYLLELKTN</sequence>
<evidence type="ECO:0000255" key="1">
    <source>
        <dbReference type="HAMAP-Rule" id="MF_00016"/>
    </source>
</evidence>
<gene>
    <name evidence="1" type="primary">ruvB</name>
    <name type="ordered locus">mhp422</name>
</gene>
<name>RUVB_MESH2</name>
<dbReference type="EC" id="3.6.4.-" evidence="1"/>
<dbReference type="EMBL" id="AE017332">
    <property type="protein sequence ID" value="AAV27572.1"/>
    <property type="molecule type" value="Genomic_DNA"/>
</dbReference>
<dbReference type="RefSeq" id="WP_011206256.1">
    <property type="nucleotide sequence ID" value="NC_006360.1"/>
</dbReference>
<dbReference type="SMR" id="Q600N3"/>
<dbReference type="GeneID" id="41334720"/>
<dbReference type="KEGG" id="mhy:mhp422"/>
<dbReference type="eggNOG" id="COG2255">
    <property type="taxonomic scope" value="Bacteria"/>
</dbReference>
<dbReference type="HOGENOM" id="CLU_055599_1_0_14"/>
<dbReference type="PhylomeDB" id="Q600N3"/>
<dbReference type="Proteomes" id="UP000006822">
    <property type="component" value="Chromosome"/>
</dbReference>
<dbReference type="GO" id="GO:0005737">
    <property type="term" value="C:cytoplasm"/>
    <property type="evidence" value="ECO:0007669"/>
    <property type="project" value="UniProtKB-SubCell"/>
</dbReference>
<dbReference type="GO" id="GO:0048476">
    <property type="term" value="C:Holliday junction resolvase complex"/>
    <property type="evidence" value="ECO:0007669"/>
    <property type="project" value="UniProtKB-UniRule"/>
</dbReference>
<dbReference type="GO" id="GO:0005524">
    <property type="term" value="F:ATP binding"/>
    <property type="evidence" value="ECO:0007669"/>
    <property type="project" value="UniProtKB-UniRule"/>
</dbReference>
<dbReference type="GO" id="GO:0016887">
    <property type="term" value="F:ATP hydrolysis activity"/>
    <property type="evidence" value="ECO:0007669"/>
    <property type="project" value="InterPro"/>
</dbReference>
<dbReference type="GO" id="GO:0000400">
    <property type="term" value="F:four-way junction DNA binding"/>
    <property type="evidence" value="ECO:0007669"/>
    <property type="project" value="UniProtKB-UniRule"/>
</dbReference>
<dbReference type="GO" id="GO:0009378">
    <property type="term" value="F:four-way junction helicase activity"/>
    <property type="evidence" value="ECO:0007669"/>
    <property type="project" value="InterPro"/>
</dbReference>
<dbReference type="GO" id="GO:0006310">
    <property type="term" value="P:DNA recombination"/>
    <property type="evidence" value="ECO:0007669"/>
    <property type="project" value="UniProtKB-UniRule"/>
</dbReference>
<dbReference type="GO" id="GO:0006281">
    <property type="term" value="P:DNA repair"/>
    <property type="evidence" value="ECO:0007669"/>
    <property type="project" value="UniProtKB-UniRule"/>
</dbReference>
<dbReference type="CDD" id="cd00009">
    <property type="entry name" value="AAA"/>
    <property type="match status" value="1"/>
</dbReference>
<dbReference type="Gene3D" id="1.10.8.60">
    <property type="match status" value="1"/>
</dbReference>
<dbReference type="Gene3D" id="3.40.50.300">
    <property type="entry name" value="P-loop containing nucleotide triphosphate hydrolases"/>
    <property type="match status" value="1"/>
</dbReference>
<dbReference type="Gene3D" id="1.10.10.10">
    <property type="entry name" value="Winged helix-like DNA-binding domain superfamily/Winged helix DNA-binding domain"/>
    <property type="match status" value="1"/>
</dbReference>
<dbReference type="HAMAP" id="MF_00016">
    <property type="entry name" value="DNA_HJ_migration_RuvB"/>
    <property type="match status" value="1"/>
</dbReference>
<dbReference type="InterPro" id="IPR003593">
    <property type="entry name" value="AAA+_ATPase"/>
</dbReference>
<dbReference type="InterPro" id="IPR041445">
    <property type="entry name" value="AAA_lid_4"/>
</dbReference>
<dbReference type="InterPro" id="IPR000641">
    <property type="entry name" value="CbxX/CfxQ"/>
</dbReference>
<dbReference type="InterPro" id="IPR004605">
    <property type="entry name" value="DNA_helicase_Holl-junc_RuvB"/>
</dbReference>
<dbReference type="InterPro" id="IPR027417">
    <property type="entry name" value="P-loop_NTPase"/>
</dbReference>
<dbReference type="InterPro" id="IPR008824">
    <property type="entry name" value="RuvB-like_N"/>
</dbReference>
<dbReference type="InterPro" id="IPR008823">
    <property type="entry name" value="RuvB_C"/>
</dbReference>
<dbReference type="InterPro" id="IPR036388">
    <property type="entry name" value="WH-like_DNA-bd_sf"/>
</dbReference>
<dbReference type="InterPro" id="IPR036390">
    <property type="entry name" value="WH_DNA-bd_sf"/>
</dbReference>
<dbReference type="NCBIfam" id="NF000868">
    <property type="entry name" value="PRK00080.1"/>
    <property type="match status" value="1"/>
</dbReference>
<dbReference type="NCBIfam" id="TIGR00635">
    <property type="entry name" value="ruvB"/>
    <property type="match status" value="1"/>
</dbReference>
<dbReference type="PANTHER" id="PTHR42848">
    <property type="match status" value="1"/>
</dbReference>
<dbReference type="PANTHER" id="PTHR42848:SF1">
    <property type="entry name" value="HOLLIDAY JUNCTION BRANCH MIGRATION COMPLEX SUBUNIT RUVB"/>
    <property type="match status" value="1"/>
</dbReference>
<dbReference type="Pfam" id="PF17864">
    <property type="entry name" value="AAA_lid_4"/>
    <property type="match status" value="1"/>
</dbReference>
<dbReference type="Pfam" id="PF05491">
    <property type="entry name" value="RuvB_C"/>
    <property type="match status" value="1"/>
</dbReference>
<dbReference type="Pfam" id="PF05496">
    <property type="entry name" value="RuvB_N"/>
    <property type="match status" value="1"/>
</dbReference>
<dbReference type="PRINTS" id="PR00819">
    <property type="entry name" value="CBXCFQXSUPER"/>
</dbReference>
<dbReference type="SMART" id="SM00382">
    <property type="entry name" value="AAA"/>
    <property type="match status" value="1"/>
</dbReference>
<dbReference type="SUPFAM" id="SSF52540">
    <property type="entry name" value="P-loop containing nucleoside triphosphate hydrolases"/>
    <property type="match status" value="1"/>
</dbReference>
<dbReference type="SUPFAM" id="SSF46785">
    <property type="entry name" value="Winged helix' DNA-binding domain"/>
    <property type="match status" value="1"/>
</dbReference>
<organism>
    <name type="scientific">Mesomycoplasma hyopneumoniae (strain 232)</name>
    <name type="common">Mycoplasma hyopneumoniae</name>
    <dbReference type="NCBI Taxonomy" id="295358"/>
    <lineage>
        <taxon>Bacteria</taxon>
        <taxon>Bacillati</taxon>
        <taxon>Mycoplasmatota</taxon>
        <taxon>Mycoplasmoidales</taxon>
        <taxon>Metamycoplasmataceae</taxon>
        <taxon>Mesomycoplasma</taxon>
    </lineage>
</organism>
<accession>Q600N3</accession>
<proteinExistence type="inferred from homology"/>
<keyword id="KW-0067">ATP-binding</keyword>
<keyword id="KW-0963">Cytoplasm</keyword>
<keyword id="KW-0227">DNA damage</keyword>
<keyword id="KW-0233">DNA recombination</keyword>
<keyword id="KW-0234">DNA repair</keyword>
<keyword id="KW-0238">DNA-binding</keyword>
<keyword id="KW-0378">Hydrolase</keyword>
<keyword id="KW-0547">Nucleotide-binding</keyword>
<reference key="1">
    <citation type="journal article" date="2004" name="J. Bacteriol.">
        <title>The genome sequence of Mycoplasma hyopneumoniae strain 232, the agent of swine mycoplasmosis.</title>
        <authorList>
            <person name="Minion F.C."/>
            <person name="Lefkowitz E.J."/>
            <person name="Madsen M.L."/>
            <person name="Cleary B.J."/>
            <person name="Swartzell S.M."/>
            <person name="Mahairas G.G."/>
        </authorList>
    </citation>
    <scope>NUCLEOTIDE SEQUENCE [LARGE SCALE GENOMIC DNA]</scope>
    <source>
        <strain>232</strain>
    </source>
</reference>
<feature type="chain" id="PRO_0000165557" description="Holliday junction branch migration complex subunit RuvB">
    <location>
        <begin position="1"/>
        <end position="318"/>
    </location>
</feature>
<feature type="region of interest" description="Large ATPase domain (RuvB-L)" evidence="1">
    <location>
        <begin position="1"/>
        <end position="168"/>
    </location>
</feature>
<feature type="region of interest" description="Small ATPAse domain (RuvB-S)" evidence="1">
    <location>
        <begin position="169"/>
        <end position="239"/>
    </location>
</feature>
<feature type="region of interest" description="Head domain (RuvB-H)" evidence="1">
    <location>
        <begin position="242"/>
        <end position="318"/>
    </location>
</feature>
<feature type="binding site" evidence="1">
    <location>
        <position position="7"/>
    </location>
    <ligand>
        <name>ATP</name>
        <dbReference type="ChEBI" id="CHEBI:30616"/>
    </ligand>
</feature>
<feature type="binding site" evidence="1">
    <location>
        <position position="8"/>
    </location>
    <ligand>
        <name>ATP</name>
        <dbReference type="ChEBI" id="CHEBI:30616"/>
    </ligand>
</feature>
<feature type="binding site" evidence="1">
    <location>
        <position position="49"/>
    </location>
    <ligand>
        <name>ATP</name>
        <dbReference type="ChEBI" id="CHEBI:30616"/>
    </ligand>
</feature>
<feature type="binding site" evidence="1">
    <location>
        <position position="52"/>
    </location>
    <ligand>
        <name>ATP</name>
        <dbReference type="ChEBI" id="CHEBI:30616"/>
    </ligand>
</feature>
<feature type="binding site" evidence="1">
    <location>
        <position position="53"/>
    </location>
    <ligand>
        <name>ATP</name>
        <dbReference type="ChEBI" id="CHEBI:30616"/>
    </ligand>
</feature>
<feature type="binding site" evidence="1">
    <location>
        <position position="53"/>
    </location>
    <ligand>
        <name>Mg(2+)</name>
        <dbReference type="ChEBI" id="CHEBI:18420"/>
    </ligand>
</feature>
<feature type="binding site" evidence="1">
    <location>
        <position position="54"/>
    </location>
    <ligand>
        <name>ATP</name>
        <dbReference type="ChEBI" id="CHEBI:30616"/>
    </ligand>
</feature>
<feature type="binding site" evidence="1">
    <location>
        <position position="158"/>
    </location>
    <ligand>
        <name>ATP</name>
        <dbReference type="ChEBI" id="CHEBI:30616"/>
    </ligand>
</feature>
<feature type="binding site" evidence="1">
    <location>
        <position position="168"/>
    </location>
    <ligand>
        <name>ATP</name>
        <dbReference type="ChEBI" id="CHEBI:30616"/>
    </ligand>
</feature>
<feature type="binding site" evidence="1">
    <location>
        <position position="205"/>
    </location>
    <ligand>
        <name>ATP</name>
        <dbReference type="ChEBI" id="CHEBI:30616"/>
    </ligand>
</feature>
<feature type="binding site" evidence="1">
    <location>
        <position position="278"/>
    </location>
    <ligand>
        <name>DNA</name>
        <dbReference type="ChEBI" id="CHEBI:16991"/>
    </ligand>
</feature>
<feature type="binding site" evidence="1">
    <location>
        <position position="297"/>
    </location>
    <ligand>
        <name>DNA</name>
        <dbReference type="ChEBI" id="CHEBI:16991"/>
    </ligand>
</feature>
<feature type="binding site" evidence="1">
    <location>
        <position position="302"/>
    </location>
    <ligand>
        <name>DNA</name>
        <dbReference type="ChEBI" id="CHEBI:16991"/>
    </ligand>
</feature>